<feature type="chain" id="PRO_0000208537" description="Probable ECA polymerase">
    <location>
        <begin position="1"/>
        <end position="450"/>
    </location>
</feature>
<feature type="transmembrane region" description="Helical" evidence="1">
    <location>
        <begin position="6"/>
        <end position="26"/>
    </location>
</feature>
<feature type="transmembrane region" description="Helical" evidence="1">
    <location>
        <begin position="37"/>
        <end position="57"/>
    </location>
</feature>
<feature type="transmembrane region" description="Helical" evidence="1">
    <location>
        <begin position="63"/>
        <end position="83"/>
    </location>
</feature>
<feature type="transmembrane region" description="Helical" evidence="1">
    <location>
        <begin position="118"/>
        <end position="138"/>
    </location>
</feature>
<feature type="transmembrane region" description="Helical" evidence="1">
    <location>
        <begin position="155"/>
        <end position="175"/>
    </location>
</feature>
<feature type="transmembrane region" description="Helical" evidence="1">
    <location>
        <begin position="181"/>
        <end position="201"/>
    </location>
</feature>
<feature type="transmembrane region" description="Helical" evidence="1">
    <location>
        <begin position="207"/>
        <end position="227"/>
    </location>
</feature>
<feature type="transmembrane region" description="Helical" evidence="1">
    <location>
        <begin position="228"/>
        <end position="248"/>
    </location>
</feature>
<feature type="transmembrane region" description="Helical" evidence="1">
    <location>
        <begin position="341"/>
        <end position="361"/>
    </location>
</feature>
<feature type="transmembrane region" description="Helical" evidence="1">
    <location>
        <begin position="378"/>
        <end position="398"/>
    </location>
</feature>
<feature type="transmembrane region" description="Helical" evidence="1">
    <location>
        <begin position="410"/>
        <end position="430"/>
    </location>
</feature>
<evidence type="ECO:0000255" key="1">
    <source>
        <dbReference type="HAMAP-Rule" id="MF_01003"/>
    </source>
</evidence>
<reference key="1">
    <citation type="journal article" date="2002" name="Proc. Natl. Acad. Sci. U.S.A.">
        <title>Extensive mosaic structure revealed by the complete genome sequence of uropathogenic Escherichia coli.</title>
        <authorList>
            <person name="Welch R.A."/>
            <person name="Burland V."/>
            <person name="Plunkett G. III"/>
            <person name="Redford P."/>
            <person name="Roesch P."/>
            <person name="Rasko D."/>
            <person name="Buckles E.L."/>
            <person name="Liou S.-R."/>
            <person name="Boutin A."/>
            <person name="Hackett J."/>
            <person name="Stroud D."/>
            <person name="Mayhew G.F."/>
            <person name="Rose D.J."/>
            <person name="Zhou S."/>
            <person name="Schwartz D.C."/>
            <person name="Perna N.T."/>
            <person name="Mobley H.L.T."/>
            <person name="Donnenberg M.S."/>
            <person name="Blattner F.R."/>
        </authorList>
    </citation>
    <scope>NUCLEOTIDE SEQUENCE [LARGE SCALE GENOMIC DNA]</scope>
    <source>
        <strain>CFT073 / ATCC 700928 / UPEC</strain>
    </source>
</reference>
<gene>
    <name evidence="1" type="primary">wzyE</name>
    <name type="synonym">wzy</name>
    <name type="ordered locus">c4715</name>
</gene>
<dbReference type="EMBL" id="AE014075">
    <property type="protein sequence ID" value="AAN83148.1"/>
    <property type="molecule type" value="Genomic_DNA"/>
</dbReference>
<dbReference type="RefSeq" id="WP_000055119.1">
    <property type="nucleotide sequence ID" value="NZ_CP051263.1"/>
</dbReference>
<dbReference type="STRING" id="199310.c4715"/>
<dbReference type="KEGG" id="ecc:c4715"/>
<dbReference type="eggNOG" id="ENOG502Z7MA">
    <property type="taxonomic scope" value="Bacteria"/>
</dbReference>
<dbReference type="HOGENOM" id="CLU_049711_0_0_6"/>
<dbReference type="BioCyc" id="ECOL199310:C4715-MONOMER"/>
<dbReference type="UniPathway" id="UPA00566"/>
<dbReference type="Proteomes" id="UP000001410">
    <property type="component" value="Chromosome"/>
</dbReference>
<dbReference type="GO" id="GO:0005886">
    <property type="term" value="C:plasma membrane"/>
    <property type="evidence" value="ECO:0007669"/>
    <property type="project" value="UniProtKB-SubCell"/>
</dbReference>
<dbReference type="GO" id="GO:0009246">
    <property type="term" value="P:enterobacterial common antigen biosynthetic process"/>
    <property type="evidence" value="ECO:0007669"/>
    <property type="project" value="UniProtKB-UniRule"/>
</dbReference>
<dbReference type="HAMAP" id="MF_01003">
    <property type="entry name" value="WzyE"/>
    <property type="match status" value="1"/>
</dbReference>
<dbReference type="InterPro" id="IPR010691">
    <property type="entry name" value="WzyE"/>
</dbReference>
<dbReference type="NCBIfam" id="NF002820">
    <property type="entry name" value="PRK02975.1"/>
    <property type="match status" value="1"/>
</dbReference>
<dbReference type="Pfam" id="PF06899">
    <property type="entry name" value="WzyE"/>
    <property type="match status" value="1"/>
</dbReference>
<name>WZYE_ECOL6</name>
<sequence>MSLLQFSGLFVVWLLCTLFIATLTWFEFRRVRFNFNVFFSLLFLLTFFFGFPLTSVLVFRFDVGVAPPEILLQALLSAGCFYAVYYVTYKTRLRKRVADAPRRPLFTMNRVETNLTWVILMGIALVSVGIFFMHNGFLLFRLNSYSQIFSSEVSGVALKRFFYFFIPAMLVVYFLRQDSKAWLFFLVSTVAFGLLTYMIVGGTRANIIIAFAIFLFIGIIRGWISLWMLAAAGVLGIVGMFWLALKRYGMNVSGDEAFYTFLYLTRDTFSPWENLALLLQNYDNIDFQGLAPIVRDFYVFIPSWLWPGRPSMVLNSANYFTWEVLNNHSGLAISPTLIGSLVVMGGALFIPLGAIVVGLIIKWFDWLYELGNRETNRYKAAILHSFCFGAIFNMIVLAREGLDSFVSRVVFFIVVFGACLMIAKLLYWLFESAGLIHKRTKSSLRTQVEG</sequence>
<organism>
    <name type="scientific">Escherichia coli O6:H1 (strain CFT073 / ATCC 700928 / UPEC)</name>
    <dbReference type="NCBI Taxonomy" id="199310"/>
    <lineage>
        <taxon>Bacteria</taxon>
        <taxon>Pseudomonadati</taxon>
        <taxon>Pseudomonadota</taxon>
        <taxon>Gammaproteobacteria</taxon>
        <taxon>Enterobacterales</taxon>
        <taxon>Enterobacteriaceae</taxon>
        <taxon>Escherichia</taxon>
    </lineage>
</organism>
<accession>Q8FBP8</accession>
<keyword id="KW-0997">Cell inner membrane</keyword>
<keyword id="KW-1003">Cell membrane</keyword>
<keyword id="KW-0472">Membrane</keyword>
<keyword id="KW-1185">Reference proteome</keyword>
<keyword id="KW-0812">Transmembrane</keyword>
<keyword id="KW-1133">Transmembrane helix</keyword>
<protein>
    <recommendedName>
        <fullName evidence="1">Probable ECA polymerase</fullName>
    </recommendedName>
</protein>
<comment type="function">
    <text evidence="1">Probably involved in the polymerization of enterobacterial common antigen (ECA) trisaccharide repeat units.</text>
</comment>
<comment type="pathway">
    <text evidence="1">Bacterial outer membrane biogenesis; enterobacterial common antigen biosynthesis.</text>
</comment>
<comment type="subunit">
    <text evidence="1">Probably part of a complex composed of WzxE, WzyE and WzzE.</text>
</comment>
<comment type="subcellular location">
    <subcellularLocation>
        <location evidence="1">Cell inner membrane</location>
        <topology evidence="1">Multi-pass membrane protein</topology>
    </subcellularLocation>
</comment>
<comment type="similarity">
    <text evidence="1">Belongs to the WzyE family.</text>
</comment>
<proteinExistence type="inferred from homology"/>